<dbReference type="EC" id="1.3.1.6"/>
<dbReference type="EMBL" id="U18779">
    <property type="protein sequence ID" value="AAB64995.1"/>
    <property type="molecule type" value="Genomic_DNA"/>
</dbReference>
<dbReference type="EMBL" id="BK006939">
    <property type="protein sequence ID" value="DAA07607.1"/>
    <property type="molecule type" value="Genomic_DNA"/>
</dbReference>
<dbReference type="PIR" id="S30830">
    <property type="entry name" value="S30830"/>
</dbReference>
<dbReference type="RefSeq" id="NP_010867.3">
    <property type="nucleotide sequence ID" value="NM_001178862.3"/>
</dbReference>
<dbReference type="SMR" id="P32614"/>
<dbReference type="BioGRID" id="36683">
    <property type="interactions" value="43"/>
</dbReference>
<dbReference type="DIP" id="DIP-5287N"/>
<dbReference type="FunCoup" id="P32614">
    <property type="interactions" value="58"/>
</dbReference>
<dbReference type="IntAct" id="P32614">
    <property type="interactions" value="5"/>
</dbReference>
<dbReference type="MINT" id="P32614"/>
<dbReference type="STRING" id="4932.YEL047C"/>
<dbReference type="iPTMnet" id="P32614"/>
<dbReference type="PaxDb" id="4932-YEL047C"/>
<dbReference type="PeptideAtlas" id="P32614"/>
<dbReference type="EnsemblFungi" id="YEL047C_mRNA">
    <property type="protein sequence ID" value="YEL047C"/>
    <property type="gene ID" value="YEL047C"/>
</dbReference>
<dbReference type="GeneID" id="856664"/>
<dbReference type="KEGG" id="sce:YEL047C"/>
<dbReference type="AGR" id="SGD:S000000773"/>
<dbReference type="SGD" id="S000000773">
    <property type="gene designation" value="FRD1"/>
</dbReference>
<dbReference type="VEuPathDB" id="FungiDB:YEL047C"/>
<dbReference type="eggNOG" id="KOG2404">
    <property type="taxonomic scope" value="Eukaryota"/>
</dbReference>
<dbReference type="GeneTree" id="ENSGT00940000176615"/>
<dbReference type="HOGENOM" id="CLU_011398_4_5_1"/>
<dbReference type="InParanoid" id="P32614"/>
<dbReference type="OMA" id="MAWAHGA"/>
<dbReference type="OrthoDB" id="10254877at2759"/>
<dbReference type="BioCyc" id="MetaCyc:G3O-30165-MONOMER"/>
<dbReference type="BioCyc" id="YEAST:G3O-30165-MONOMER"/>
<dbReference type="BioGRID-ORCS" id="856664">
    <property type="hits" value="3 hits in 10 CRISPR screens"/>
</dbReference>
<dbReference type="PRO" id="PR:P32614"/>
<dbReference type="Proteomes" id="UP000002311">
    <property type="component" value="Chromosome V"/>
</dbReference>
<dbReference type="RNAct" id="P32614">
    <property type="molecule type" value="protein"/>
</dbReference>
<dbReference type="GO" id="GO:0005737">
    <property type="term" value="C:cytoplasm"/>
    <property type="evidence" value="ECO:0000318"/>
    <property type="project" value="GO_Central"/>
</dbReference>
<dbReference type="GO" id="GO:0005829">
    <property type="term" value="C:cytosol"/>
    <property type="evidence" value="ECO:0000314"/>
    <property type="project" value="SGD"/>
</dbReference>
<dbReference type="GO" id="GO:0005739">
    <property type="term" value="C:mitochondrion"/>
    <property type="evidence" value="ECO:0007005"/>
    <property type="project" value="SGD"/>
</dbReference>
<dbReference type="GO" id="GO:0005886">
    <property type="term" value="C:plasma membrane"/>
    <property type="evidence" value="ECO:0007005"/>
    <property type="project" value="SGD"/>
</dbReference>
<dbReference type="GO" id="GO:0010181">
    <property type="term" value="F:FMN binding"/>
    <property type="evidence" value="ECO:0007669"/>
    <property type="project" value="InterPro"/>
</dbReference>
<dbReference type="GO" id="GO:0016156">
    <property type="term" value="F:fumarate reductase (NADH) activity"/>
    <property type="evidence" value="ECO:0000314"/>
    <property type="project" value="SGD"/>
</dbReference>
<dbReference type="GO" id="GO:0071454">
    <property type="term" value="P:cellular response to anoxia"/>
    <property type="evidence" value="ECO:0000316"/>
    <property type="project" value="SGD"/>
</dbReference>
<dbReference type="FunFam" id="3.90.700.10:FF:000007">
    <property type="entry name" value="NADH-dependent fumarate reductase"/>
    <property type="match status" value="1"/>
</dbReference>
<dbReference type="Gene3D" id="3.50.50.60">
    <property type="entry name" value="FAD/NAD(P)-binding domain"/>
    <property type="match status" value="1"/>
</dbReference>
<dbReference type="Gene3D" id="3.90.700.10">
    <property type="entry name" value="Succinate dehydrogenase/fumarate reductase flavoprotein, catalytic domain"/>
    <property type="match status" value="1"/>
</dbReference>
<dbReference type="InterPro" id="IPR003953">
    <property type="entry name" value="FAD-dep_OxRdtase_2_FAD-bd"/>
</dbReference>
<dbReference type="InterPro" id="IPR050315">
    <property type="entry name" value="FAD-oxidoreductase_2"/>
</dbReference>
<dbReference type="InterPro" id="IPR036188">
    <property type="entry name" value="FAD/NAD-bd_sf"/>
</dbReference>
<dbReference type="InterPro" id="IPR010960">
    <property type="entry name" value="Flavocytochrome_c"/>
</dbReference>
<dbReference type="InterPro" id="IPR027477">
    <property type="entry name" value="Succ_DH/fumarate_Rdtase_cat_sf"/>
</dbReference>
<dbReference type="NCBIfam" id="TIGR01813">
    <property type="entry name" value="flavo_cyto_c"/>
    <property type="match status" value="1"/>
</dbReference>
<dbReference type="PANTHER" id="PTHR43400:SF7">
    <property type="entry name" value="FAD-DEPENDENT OXIDOREDUCTASE 2 FAD BINDING DOMAIN-CONTAINING PROTEIN"/>
    <property type="match status" value="1"/>
</dbReference>
<dbReference type="PANTHER" id="PTHR43400">
    <property type="entry name" value="FUMARATE REDUCTASE"/>
    <property type="match status" value="1"/>
</dbReference>
<dbReference type="Pfam" id="PF00890">
    <property type="entry name" value="FAD_binding_2"/>
    <property type="match status" value="1"/>
</dbReference>
<dbReference type="SUPFAM" id="SSF51905">
    <property type="entry name" value="FAD/NAD(P)-binding domain"/>
    <property type="match status" value="1"/>
</dbReference>
<dbReference type="SUPFAM" id="SSF56425">
    <property type="entry name" value="Succinate dehydrogenase/fumarate reductase flavoprotein, catalytic domain"/>
    <property type="match status" value="1"/>
</dbReference>
<gene>
    <name type="primary">FRD1</name>
    <name type="synonym">FRDS</name>
    <name type="synonym">FRDS1</name>
    <name type="ordered locus">YEL047C</name>
    <name type="ORF">SYGP-ORF35</name>
</gene>
<keyword id="KW-0963">Cytoplasm</keyword>
<keyword id="KW-0903">Direct protein sequencing</keyword>
<keyword id="KW-0274">FAD</keyword>
<keyword id="KW-0285">Flavoprotein</keyword>
<keyword id="KW-0520">NAD</keyword>
<keyword id="KW-0560">Oxidoreductase</keyword>
<keyword id="KW-0597">Phosphoprotein</keyword>
<keyword id="KW-1185">Reference proteome</keyword>
<organism>
    <name type="scientific">Saccharomyces cerevisiae (strain ATCC 204508 / S288c)</name>
    <name type="common">Baker's yeast</name>
    <dbReference type="NCBI Taxonomy" id="559292"/>
    <lineage>
        <taxon>Eukaryota</taxon>
        <taxon>Fungi</taxon>
        <taxon>Dikarya</taxon>
        <taxon>Ascomycota</taxon>
        <taxon>Saccharomycotina</taxon>
        <taxon>Saccharomycetes</taxon>
        <taxon>Saccharomycetales</taxon>
        <taxon>Saccharomycetaceae</taxon>
        <taxon>Saccharomyces</taxon>
    </lineage>
</organism>
<feature type="chain" id="PRO_0000158669" description="Fumarate reductase 1">
    <location>
        <begin position="1"/>
        <end position="470"/>
    </location>
</feature>
<feature type="active site" evidence="1">
    <location>
        <position position="249"/>
    </location>
</feature>
<feature type="active site" evidence="1">
    <location>
        <position position="272"/>
    </location>
</feature>
<feature type="binding site" evidence="2">
    <location>
        <begin position="6"/>
        <end position="20"/>
    </location>
    <ligand>
        <name>FAD</name>
        <dbReference type="ChEBI" id="CHEBI:57692"/>
    </ligand>
</feature>
<feature type="modified residue" description="Phosphoserine" evidence="11">
    <location>
        <position position="66"/>
    </location>
</feature>
<feature type="sequence conflict" description="In Ref. 1; AA sequence." evidence="10" ref="1">
    <original>R</original>
    <variation>K</variation>
    <location>
        <position position="285"/>
    </location>
</feature>
<feature type="sequence conflict" description="In Ref. 1; AA sequence." evidence="10" ref="1">
    <original>V</original>
    <variation>L</variation>
    <location>
        <position position="440"/>
    </location>
</feature>
<evidence type="ECO:0000250" key="1"/>
<evidence type="ECO:0000255" key="2"/>
<evidence type="ECO:0000269" key="3">
    <source>
    </source>
</evidence>
<evidence type="ECO:0000269" key="4">
    <source>
    </source>
</evidence>
<evidence type="ECO:0000269" key="5">
    <source>
    </source>
</evidence>
<evidence type="ECO:0000269" key="6">
    <source>
    </source>
</evidence>
<evidence type="ECO:0000269" key="7">
    <source>
    </source>
</evidence>
<evidence type="ECO:0000269" key="8">
    <source>
    </source>
</evidence>
<evidence type="ECO:0000269" key="9">
    <source ref="4"/>
</evidence>
<evidence type="ECO:0000305" key="10"/>
<evidence type="ECO:0007744" key="11">
    <source>
    </source>
</evidence>
<proteinExistence type="evidence at protein level"/>
<comment type="function">
    <text evidence="3 5 8 9">Irreversibly catalyzes the reduction of fumarate to succinate. Together with the second isozyme of soluble fumarate reductase (OSM1), essential for anaerobic growth. Involved in maintaining redox balance. Reduction of fumarate is the main source of succinate during fermentation, and under anaerobic conditions, the formation of succinate is strictly required for the reoxidation of FADH(2).</text>
</comment>
<comment type="catalytic activity">
    <reaction evidence="9">
        <text>succinate + NAD(+) = fumarate + NADH + H(+)</text>
        <dbReference type="Rhea" id="RHEA:18281"/>
        <dbReference type="ChEBI" id="CHEBI:15378"/>
        <dbReference type="ChEBI" id="CHEBI:29806"/>
        <dbReference type="ChEBI" id="CHEBI:30031"/>
        <dbReference type="ChEBI" id="CHEBI:57540"/>
        <dbReference type="ChEBI" id="CHEBI:57945"/>
        <dbReference type="EC" id="1.3.1.6"/>
    </reaction>
</comment>
<comment type="cofactor">
    <cofactor evidence="6 9">
        <name>FAD</name>
        <dbReference type="ChEBI" id="CHEBI:57692"/>
    </cofactor>
    <text evidence="6 9">Binds 1 FAD per monomer.</text>
</comment>
<comment type="biophysicochemical properties">
    <kinetics>
        <KM evidence="9">0.2 mM for fumarate</KM>
    </kinetics>
</comment>
<comment type="subcellular location">
    <subcellularLocation>
        <location evidence="6 7">Cytoplasm</location>
    </subcellularLocation>
</comment>
<comment type="induction">
    <text evidence="5">During anaerobic growth.</text>
</comment>
<comment type="PTM">
    <text>The N-terminus is blocked.</text>
</comment>
<comment type="miscellaneous">
    <text evidence="4">Present with 7620 molecules/cell in log phase SD medium.</text>
</comment>
<comment type="similarity">
    <text evidence="10">Belongs to the FAD-dependent oxidoreductase 2 family. FRD/SDH subfamily.</text>
</comment>
<protein>
    <recommendedName>
        <fullName>Fumarate reductase 1</fullName>
        <shortName>FRDS1</shortName>
        <ecNumber>1.3.1.6</ecNumber>
    </recommendedName>
    <alternativeName>
        <fullName>FAD-dependent oxidoreductase</fullName>
    </alternativeName>
    <alternativeName>
        <fullName>NADH-dependent fumarate reductase</fullName>
    </alternativeName>
    <alternativeName>
        <fullName>Soluble fumarate reductase, cytoplasmic isozyme</fullName>
    </alternativeName>
</protein>
<sequence length="470" mass="50844">MSLSPVVVIGTGLAGLAAANELVNKYNIPVTILEKASSIGGNSIKASSGINGACTETQRHFHIEDSPRLFEDDTIKSAKGKGVQELMAKLANDSPLAIEWLKNEFDLKLDLLAQLGGHSVARTHRSSGKLPPGFEIVSALSNNLKKLAETKPELVKINLDSKVVDIHEKDGSISAVVYEDKNGEKHMVSANDVVFCSGGFGFSKEMLKEYAPELVNLPTTNGQQTTGDGQRLLQKLGADLIDMDQIQVHPTGFIDPNDRSSSWKFLAAESLRGLGGILLNPITGRRFVNELTTRDVVTAAIQKVCPQEDNRALLVMGEKMYTDLKNNLDFYMFKKLVQKLTLSQVVSEYNLPITVAQLCEELQTYSSFTTKADPLGRTVILNEFGSDVTPETVVFIGEVTPVVHFTMGGARINVKAQVIGKNDERLLKGLYAAGEVSGGVHGANRLGGSSLLECVVFGRTAAESIANDRK</sequence>
<name>FRDS_YEAST</name>
<reference key="1">
    <citation type="journal article" date="1996" name="DNA Res.">
        <title>Cloning and sequencing of the gene encoding the soluble fumarate reductase from Saccharomyces cerevisiae.</title>
        <authorList>
            <person name="Enomoto K."/>
            <person name="Ohki R."/>
            <person name="Muratsubaki H."/>
        </authorList>
    </citation>
    <scope>NUCLEOTIDE SEQUENCE [GENOMIC DNA]</scope>
    <scope>PROTEIN SEQUENCE OF 89-106; 245-253; 322-327 AND 409-423</scope>
    <scope>COFACTOR</scope>
    <scope>SUBCELLULAR LOCATION</scope>
</reference>
<reference key="2">
    <citation type="journal article" date="1997" name="Nature">
        <title>The nucleotide sequence of Saccharomyces cerevisiae chromosome V.</title>
        <authorList>
            <person name="Dietrich F.S."/>
            <person name="Mulligan J.T."/>
            <person name="Hennessy K.M."/>
            <person name="Yelton M.A."/>
            <person name="Allen E."/>
            <person name="Araujo R."/>
            <person name="Aviles E."/>
            <person name="Berno A."/>
            <person name="Brennan T."/>
            <person name="Carpenter J."/>
            <person name="Chen E."/>
            <person name="Cherry J.M."/>
            <person name="Chung E."/>
            <person name="Duncan M."/>
            <person name="Guzman E."/>
            <person name="Hartzell G."/>
            <person name="Hunicke-Smith S."/>
            <person name="Hyman R.W."/>
            <person name="Kayser A."/>
            <person name="Komp C."/>
            <person name="Lashkari D."/>
            <person name="Lew H."/>
            <person name="Lin D."/>
            <person name="Mosedale D."/>
            <person name="Nakahara K."/>
            <person name="Namath A."/>
            <person name="Norgren R."/>
            <person name="Oefner P."/>
            <person name="Oh C."/>
            <person name="Petel F.X."/>
            <person name="Roberts D."/>
            <person name="Sehl P."/>
            <person name="Schramm S."/>
            <person name="Shogren T."/>
            <person name="Smith V."/>
            <person name="Taylor P."/>
            <person name="Wei Y."/>
            <person name="Botstein D."/>
            <person name="Davis R.W."/>
        </authorList>
    </citation>
    <scope>NUCLEOTIDE SEQUENCE [LARGE SCALE GENOMIC DNA]</scope>
    <source>
        <strain>ATCC 204508 / S288c</strain>
    </source>
</reference>
<reference key="3">
    <citation type="journal article" date="2014" name="G3 (Bethesda)">
        <title>The reference genome sequence of Saccharomyces cerevisiae: Then and now.</title>
        <authorList>
            <person name="Engel S.R."/>
            <person name="Dietrich F.S."/>
            <person name="Fisk D.G."/>
            <person name="Binkley G."/>
            <person name="Balakrishnan R."/>
            <person name="Costanzo M.C."/>
            <person name="Dwight S.S."/>
            <person name="Hitz B.C."/>
            <person name="Karra K."/>
            <person name="Nash R.S."/>
            <person name="Weng S."/>
            <person name="Wong E.D."/>
            <person name="Lloyd P."/>
            <person name="Skrzypek M.S."/>
            <person name="Miyasato S.R."/>
            <person name="Simison M."/>
            <person name="Cherry J.M."/>
        </authorList>
    </citation>
    <scope>GENOME REANNOTATION</scope>
    <source>
        <strain>ATCC 204508 / S288c</strain>
    </source>
</reference>
<reference key="4">
    <citation type="journal article" date="1982" name="Agric. Biol. Chem.">
        <title>Purification and properties of fumarate reductase from baker's yeast.</title>
        <authorList>
            <person name="Muratsubaki H."/>
            <person name="Katsume T."/>
        </authorList>
    </citation>
    <scope>FUNCTION</scope>
    <scope>CATALYTIC ACTIVITY</scope>
    <scope>COFACTOR</scope>
    <scope>BIOPHYSICOCHEMICAL PROPERTIES</scope>
</reference>
<reference key="5">
    <citation type="journal article" date="1998" name="Arch. Biochem. Biophys.">
        <title>One of the fumarate reductase isoenzymes from Saccharomyces cerevisiae is encoded by the OSM1 gene.</title>
        <authorList>
            <person name="Muratsubaki H."/>
            <person name="Enomoto K."/>
        </authorList>
    </citation>
    <scope>SUBCELLULAR LOCATION</scope>
</reference>
<reference key="6">
    <citation type="journal article" date="1998" name="FEMS Microbiol. Lett.">
        <title>Soluble fumarate reductase isoenzymes from Saccharomyces cerevisiae are required for anaerobic growth.</title>
        <authorList>
            <person name="Arikawa Y."/>
            <person name="Enomoto K."/>
            <person name="Muratsubaki H."/>
            <person name="Okazaki M."/>
        </authorList>
    </citation>
    <scope>FUNCTION</scope>
</reference>
<reference key="7">
    <citation type="journal article" date="2003" name="Microbiology">
        <title>Investigation by 13C-NMR and tricarboxylic acid (TCA) deletion mutant analysis of pathways for succinate formation in Saccharomyces cerevisiae during anaerobic fermentation.</title>
        <authorList>
            <person name="Camarasa C."/>
            <person name="Grivet J.P."/>
            <person name="Dequin S."/>
        </authorList>
    </citation>
    <scope>FUNCTION</scope>
</reference>
<reference key="8">
    <citation type="journal article" date="2003" name="Nature">
        <title>Global analysis of protein expression in yeast.</title>
        <authorList>
            <person name="Ghaemmaghami S."/>
            <person name="Huh W.-K."/>
            <person name="Bower K."/>
            <person name="Howson R.W."/>
            <person name="Belle A."/>
            <person name="Dephoure N."/>
            <person name="O'Shea E.K."/>
            <person name="Weissman J.S."/>
        </authorList>
    </citation>
    <scope>LEVEL OF PROTEIN EXPRESSION [LARGE SCALE ANALYSIS]</scope>
</reference>
<reference key="9">
    <citation type="journal article" date="2007" name="J. Proteome Res.">
        <title>Large-scale phosphorylation analysis of alpha-factor-arrested Saccharomyces cerevisiae.</title>
        <authorList>
            <person name="Li X."/>
            <person name="Gerber S.A."/>
            <person name="Rudner A.D."/>
            <person name="Beausoleil S.A."/>
            <person name="Haas W."/>
            <person name="Villen J."/>
            <person name="Elias J.E."/>
            <person name="Gygi S.P."/>
        </authorList>
    </citation>
    <scope>PHOSPHORYLATION [LARGE SCALE ANALYSIS] AT SER-66</scope>
    <scope>IDENTIFICATION BY MASS SPECTROMETRY [LARGE SCALE ANALYSIS]</scope>
    <source>
        <strain>ADR376</strain>
    </source>
</reference>
<reference key="10">
    <citation type="journal article" date="2007" name="Yeast">
        <title>Role in anaerobiosis of the isoenzymes for Saccharomyces cerevisiae fumarate reductase encoded by OSM1 and FRDS1.</title>
        <authorList>
            <person name="Camarasa C."/>
            <person name="Faucet V."/>
            <person name="Dequin S."/>
        </authorList>
    </citation>
    <scope>FUNCTION</scope>
    <scope>INDUCTION</scope>
</reference>
<accession>P32614</accession>
<accession>D3DLK3</accession>